<feature type="chain" id="PRO_1000047914" description="Protein RecA">
    <location>
        <begin position="1"/>
        <end position="353"/>
    </location>
</feature>
<feature type="region of interest" description="Disordered" evidence="2">
    <location>
        <begin position="330"/>
        <end position="353"/>
    </location>
</feature>
<feature type="compositionally biased region" description="Acidic residues" evidence="2">
    <location>
        <begin position="339"/>
        <end position="353"/>
    </location>
</feature>
<feature type="binding site" evidence="1">
    <location>
        <begin position="67"/>
        <end position="74"/>
    </location>
    <ligand>
        <name>ATP</name>
        <dbReference type="ChEBI" id="CHEBI:30616"/>
    </ligand>
</feature>
<reference key="1">
    <citation type="journal article" date="2006" name="Proc. Natl. Acad. Sci. U.S.A.">
        <title>Identification of genes subject to positive selection in uropathogenic strains of Escherichia coli: a comparative genomics approach.</title>
        <authorList>
            <person name="Chen S.L."/>
            <person name="Hung C.-S."/>
            <person name="Xu J."/>
            <person name="Reigstad C.S."/>
            <person name="Magrini V."/>
            <person name="Sabo A."/>
            <person name="Blasiar D."/>
            <person name="Bieri T."/>
            <person name="Meyer R.R."/>
            <person name="Ozersky P."/>
            <person name="Armstrong J.R."/>
            <person name="Fulton R.S."/>
            <person name="Latreille J.P."/>
            <person name="Spieth J."/>
            <person name="Hooton T.M."/>
            <person name="Mardis E.R."/>
            <person name="Hultgren S.J."/>
            <person name="Gordon J.I."/>
        </authorList>
    </citation>
    <scope>NUCLEOTIDE SEQUENCE [LARGE SCALE GENOMIC DNA]</scope>
    <source>
        <strain>UTI89 / UPEC</strain>
    </source>
</reference>
<evidence type="ECO:0000255" key="1">
    <source>
        <dbReference type="HAMAP-Rule" id="MF_00268"/>
    </source>
</evidence>
<evidence type="ECO:0000256" key="2">
    <source>
        <dbReference type="SAM" id="MobiDB-lite"/>
    </source>
</evidence>
<gene>
    <name evidence="1" type="primary">recA</name>
    <name type="ordered locus">UTI89_C3061</name>
</gene>
<accession>Q1R801</accession>
<sequence>MAIDENKQKALAAALGQIEKQFGKGSIMRLGEDRSMDVETISTGSLSLDIALGAGGLPMGRIVEIYGPESSGKTTLTLQVIAAAQREGKTCAFIDAEHALDPIYARKLGVDIDNLLCSQPDTGEQALEICDALARSGAVDVIVVDSVAALTPKAEIEGEIGDSHMGLAARMMSQAMRKLAGNLKQSNTLLIFINQIRMKIGVMFGNPETTTGGNALKFYASVRLDIRRIGAVKEGENVVGSETRVKVVKNKIAAPFKQAEFQILYGEGINFYGELVDLGVKEKLIEKAGAWYSYKGEKIGQGKANATAWLKDNPETAKEIEKKVRELLLSNPNSTPDFSVDDSEGVAETNEDF</sequence>
<keyword id="KW-0067">ATP-binding</keyword>
<keyword id="KW-0963">Cytoplasm</keyword>
<keyword id="KW-0227">DNA damage</keyword>
<keyword id="KW-0233">DNA recombination</keyword>
<keyword id="KW-0234">DNA repair</keyword>
<keyword id="KW-0238">DNA-binding</keyword>
<keyword id="KW-0547">Nucleotide-binding</keyword>
<keyword id="KW-0742">SOS response</keyword>
<comment type="function">
    <text evidence="1">Can catalyze the hydrolysis of ATP in the presence of single-stranded DNA, the ATP-dependent uptake of single-stranded DNA by duplex DNA, and the ATP-dependent hybridization of homologous single-stranded DNAs. It interacts with LexA causing its activation and leading to its autocatalytic cleavage.</text>
</comment>
<comment type="subcellular location">
    <subcellularLocation>
        <location evidence="1">Cytoplasm</location>
    </subcellularLocation>
</comment>
<comment type="similarity">
    <text evidence="1">Belongs to the RecA family.</text>
</comment>
<organism>
    <name type="scientific">Escherichia coli (strain UTI89 / UPEC)</name>
    <dbReference type="NCBI Taxonomy" id="364106"/>
    <lineage>
        <taxon>Bacteria</taxon>
        <taxon>Pseudomonadati</taxon>
        <taxon>Pseudomonadota</taxon>
        <taxon>Gammaproteobacteria</taxon>
        <taxon>Enterobacterales</taxon>
        <taxon>Enterobacteriaceae</taxon>
        <taxon>Escherichia</taxon>
    </lineage>
</organism>
<protein>
    <recommendedName>
        <fullName evidence="1">Protein RecA</fullName>
    </recommendedName>
    <alternativeName>
        <fullName evidence="1">Recombinase A</fullName>
    </alternativeName>
</protein>
<dbReference type="EMBL" id="CP000243">
    <property type="protein sequence ID" value="ABE08513.1"/>
    <property type="molecule type" value="Genomic_DNA"/>
</dbReference>
<dbReference type="RefSeq" id="WP_000963143.1">
    <property type="nucleotide sequence ID" value="NZ_CP064825.1"/>
</dbReference>
<dbReference type="SMR" id="Q1R801"/>
<dbReference type="GeneID" id="93779312"/>
<dbReference type="KEGG" id="eci:UTI89_C3061"/>
<dbReference type="HOGENOM" id="CLU_040469_3_2_6"/>
<dbReference type="Proteomes" id="UP000001952">
    <property type="component" value="Chromosome"/>
</dbReference>
<dbReference type="GO" id="GO:0005829">
    <property type="term" value="C:cytosol"/>
    <property type="evidence" value="ECO:0007669"/>
    <property type="project" value="TreeGrafter"/>
</dbReference>
<dbReference type="GO" id="GO:0005524">
    <property type="term" value="F:ATP binding"/>
    <property type="evidence" value="ECO:0007669"/>
    <property type="project" value="UniProtKB-UniRule"/>
</dbReference>
<dbReference type="GO" id="GO:0016887">
    <property type="term" value="F:ATP hydrolysis activity"/>
    <property type="evidence" value="ECO:0007669"/>
    <property type="project" value="InterPro"/>
</dbReference>
<dbReference type="GO" id="GO:0140664">
    <property type="term" value="F:ATP-dependent DNA damage sensor activity"/>
    <property type="evidence" value="ECO:0007669"/>
    <property type="project" value="InterPro"/>
</dbReference>
<dbReference type="GO" id="GO:0003684">
    <property type="term" value="F:damaged DNA binding"/>
    <property type="evidence" value="ECO:0007669"/>
    <property type="project" value="UniProtKB-UniRule"/>
</dbReference>
<dbReference type="GO" id="GO:0003697">
    <property type="term" value="F:single-stranded DNA binding"/>
    <property type="evidence" value="ECO:0007669"/>
    <property type="project" value="UniProtKB-UniRule"/>
</dbReference>
<dbReference type="GO" id="GO:0006310">
    <property type="term" value="P:DNA recombination"/>
    <property type="evidence" value="ECO:0007669"/>
    <property type="project" value="UniProtKB-UniRule"/>
</dbReference>
<dbReference type="GO" id="GO:0006281">
    <property type="term" value="P:DNA repair"/>
    <property type="evidence" value="ECO:0007669"/>
    <property type="project" value="UniProtKB-UniRule"/>
</dbReference>
<dbReference type="GO" id="GO:0009432">
    <property type="term" value="P:SOS response"/>
    <property type="evidence" value="ECO:0007669"/>
    <property type="project" value="UniProtKB-UniRule"/>
</dbReference>
<dbReference type="CDD" id="cd00983">
    <property type="entry name" value="RecA"/>
    <property type="match status" value="1"/>
</dbReference>
<dbReference type="FunFam" id="3.40.50.300:FF:000087">
    <property type="entry name" value="Recombinase RecA"/>
    <property type="match status" value="1"/>
</dbReference>
<dbReference type="Gene3D" id="3.40.50.300">
    <property type="entry name" value="P-loop containing nucleotide triphosphate hydrolases"/>
    <property type="match status" value="1"/>
</dbReference>
<dbReference type="HAMAP" id="MF_00268">
    <property type="entry name" value="RecA"/>
    <property type="match status" value="1"/>
</dbReference>
<dbReference type="InterPro" id="IPR003593">
    <property type="entry name" value="AAA+_ATPase"/>
</dbReference>
<dbReference type="InterPro" id="IPR013765">
    <property type="entry name" value="DNA_recomb/repair_RecA"/>
</dbReference>
<dbReference type="InterPro" id="IPR020584">
    <property type="entry name" value="DNA_recomb/repair_RecA_CS"/>
</dbReference>
<dbReference type="InterPro" id="IPR027417">
    <property type="entry name" value="P-loop_NTPase"/>
</dbReference>
<dbReference type="InterPro" id="IPR049261">
    <property type="entry name" value="RecA-like_C"/>
</dbReference>
<dbReference type="InterPro" id="IPR049428">
    <property type="entry name" value="RecA-like_N"/>
</dbReference>
<dbReference type="InterPro" id="IPR020588">
    <property type="entry name" value="RecA_ATP-bd"/>
</dbReference>
<dbReference type="InterPro" id="IPR023400">
    <property type="entry name" value="RecA_C_sf"/>
</dbReference>
<dbReference type="InterPro" id="IPR020587">
    <property type="entry name" value="RecA_monomer-monomer_interface"/>
</dbReference>
<dbReference type="NCBIfam" id="TIGR02012">
    <property type="entry name" value="tigrfam_recA"/>
    <property type="match status" value="1"/>
</dbReference>
<dbReference type="PANTHER" id="PTHR45900:SF1">
    <property type="entry name" value="MITOCHONDRIAL DNA REPAIR PROTEIN RECA HOMOLOG-RELATED"/>
    <property type="match status" value="1"/>
</dbReference>
<dbReference type="PANTHER" id="PTHR45900">
    <property type="entry name" value="RECA"/>
    <property type="match status" value="1"/>
</dbReference>
<dbReference type="Pfam" id="PF00154">
    <property type="entry name" value="RecA"/>
    <property type="match status" value="1"/>
</dbReference>
<dbReference type="Pfam" id="PF21096">
    <property type="entry name" value="RecA_C"/>
    <property type="match status" value="1"/>
</dbReference>
<dbReference type="PRINTS" id="PR00142">
    <property type="entry name" value="RECA"/>
</dbReference>
<dbReference type="SMART" id="SM00382">
    <property type="entry name" value="AAA"/>
    <property type="match status" value="1"/>
</dbReference>
<dbReference type="SUPFAM" id="SSF52540">
    <property type="entry name" value="P-loop containing nucleoside triphosphate hydrolases"/>
    <property type="match status" value="1"/>
</dbReference>
<dbReference type="SUPFAM" id="SSF54752">
    <property type="entry name" value="RecA protein, C-terminal domain"/>
    <property type="match status" value="1"/>
</dbReference>
<dbReference type="PROSITE" id="PS00321">
    <property type="entry name" value="RECA_1"/>
    <property type="match status" value="1"/>
</dbReference>
<dbReference type="PROSITE" id="PS50162">
    <property type="entry name" value="RECA_2"/>
    <property type="match status" value="1"/>
</dbReference>
<dbReference type="PROSITE" id="PS50163">
    <property type="entry name" value="RECA_3"/>
    <property type="match status" value="1"/>
</dbReference>
<name>RECA_ECOUT</name>
<proteinExistence type="inferred from homology"/>